<dbReference type="EMBL" id="AE000520">
    <property type="protein sequence ID" value="AAC65527.1"/>
    <property type="molecule type" value="Genomic_DNA"/>
</dbReference>
<dbReference type="PIR" id="D71312">
    <property type="entry name" value="D71312"/>
</dbReference>
<dbReference type="RefSeq" id="WP_010881990.1">
    <property type="nucleotide sequence ID" value="NC_021490.2"/>
</dbReference>
<dbReference type="SMR" id="O83554"/>
<dbReference type="IntAct" id="O83554">
    <property type="interactions" value="1"/>
</dbReference>
<dbReference type="STRING" id="243276.TP_0543"/>
<dbReference type="EnsemblBacteria" id="AAC65527">
    <property type="protein sequence ID" value="AAC65527"/>
    <property type="gene ID" value="TP_0543"/>
</dbReference>
<dbReference type="GeneID" id="93876312"/>
<dbReference type="KEGG" id="tpa:TP_0543"/>
<dbReference type="KEGG" id="tpw:TPANIC_0543"/>
<dbReference type="eggNOG" id="COG0632">
    <property type="taxonomic scope" value="Bacteria"/>
</dbReference>
<dbReference type="HOGENOM" id="CLU_087936_2_0_12"/>
<dbReference type="OrthoDB" id="5293449at2"/>
<dbReference type="Proteomes" id="UP000000811">
    <property type="component" value="Chromosome"/>
</dbReference>
<dbReference type="GO" id="GO:0005737">
    <property type="term" value="C:cytoplasm"/>
    <property type="evidence" value="ECO:0007669"/>
    <property type="project" value="UniProtKB-SubCell"/>
</dbReference>
<dbReference type="GO" id="GO:0048476">
    <property type="term" value="C:Holliday junction resolvase complex"/>
    <property type="evidence" value="ECO:0007669"/>
    <property type="project" value="UniProtKB-UniRule"/>
</dbReference>
<dbReference type="GO" id="GO:0005524">
    <property type="term" value="F:ATP binding"/>
    <property type="evidence" value="ECO:0007669"/>
    <property type="project" value="InterPro"/>
</dbReference>
<dbReference type="GO" id="GO:0000400">
    <property type="term" value="F:four-way junction DNA binding"/>
    <property type="evidence" value="ECO:0007669"/>
    <property type="project" value="UniProtKB-UniRule"/>
</dbReference>
<dbReference type="GO" id="GO:0009378">
    <property type="term" value="F:four-way junction helicase activity"/>
    <property type="evidence" value="ECO:0007669"/>
    <property type="project" value="InterPro"/>
</dbReference>
<dbReference type="GO" id="GO:0006310">
    <property type="term" value="P:DNA recombination"/>
    <property type="evidence" value="ECO:0007669"/>
    <property type="project" value="UniProtKB-UniRule"/>
</dbReference>
<dbReference type="GO" id="GO:0006281">
    <property type="term" value="P:DNA repair"/>
    <property type="evidence" value="ECO:0007669"/>
    <property type="project" value="UniProtKB-UniRule"/>
</dbReference>
<dbReference type="Gene3D" id="1.10.150.20">
    <property type="entry name" value="5' to 3' exonuclease, C-terminal subdomain"/>
    <property type="match status" value="1"/>
</dbReference>
<dbReference type="Gene3D" id="2.40.50.140">
    <property type="entry name" value="Nucleic acid-binding proteins"/>
    <property type="match status" value="1"/>
</dbReference>
<dbReference type="HAMAP" id="MF_00031">
    <property type="entry name" value="DNA_HJ_migration_RuvA"/>
    <property type="match status" value="1"/>
</dbReference>
<dbReference type="InterPro" id="IPR013849">
    <property type="entry name" value="DNA_helicase_Holl-junc_RuvA_I"/>
</dbReference>
<dbReference type="InterPro" id="IPR003583">
    <property type="entry name" value="Hlx-hairpin-Hlx_DNA-bd_motif"/>
</dbReference>
<dbReference type="InterPro" id="IPR012340">
    <property type="entry name" value="NA-bd_OB-fold"/>
</dbReference>
<dbReference type="InterPro" id="IPR000085">
    <property type="entry name" value="RuvA"/>
</dbReference>
<dbReference type="InterPro" id="IPR010994">
    <property type="entry name" value="RuvA_2-like"/>
</dbReference>
<dbReference type="NCBIfam" id="TIGR00084">
    <property type="entry name" value="ruvA"/>
    <property type="match status" value="1"/>
</dbReference>
<dbReference type="Pfam" id="PF14520">
    <property type="entry name" value="HHH_5"/>
    <property type="match status" value="1"/>
</dbReference>
<dbReference type="Pfam" id="PF01330">
    <property type="entry name" value="RuvA_N"/>
    <property type="match status" value="1"/>
</dbReference>
<dbReference type="SMART" id="SM00278">
    <property type="entry name" value="HhH1"/>
    <property type="match status" value="2"/>
</dbReference>
<dbReference type="SUPFAM" id="SSF50249">
    <property type="entry name" value="Nucleic acid-binding proteins"/>
    <property type="match status" value="1"/>
</dbReference>
<dbReference type="SUPFAM" id="SSF47781">
    <property type="entry name" value="RuvA domain 2-like"/>
    <property type="match status" value="1"/>
</dbReference>
<accession>O83554</accession>
<reference key="1">
    <citation type="journal article" date="1998" name="Science">
        <title>Complete genome sequence of Treponema pallidum, the syphilis spirochete.</title>
        <authorList>
            <person name="Fraser C.M."/>
            <person name="Norris S.J."/>
            <person name="Weinstock G.M."/>
            <person name="White O."/>
            <person name="Sutton G.G."/>
            <person name="Dodson R.J."/>
            <person name="Gwinn M.L."/>
            <person name="Hickey E.K."/>
            <person name="Clayton R.A."/>
            <person name="Ketchum K.A."/>
            <person name="Sodergren E."/>
            <person name="Hardham J.M."/>
            <person name="McLeod M.P."/>
            <person name="Salzberg S.L."/>
            <person name="Peterson J.D."/>
            <person name="Khalak H.G."/>
            <person name="Richardson D.L."/>
            <person name="Howell J.K."/>
            <person name="Chidambaram M."/>
            <person name="Utterback T.R."/>
            <person name="McDonald L.A."/>
            <person name="Artiach P."/>
            <person name="Bowman C."/>
            <person name="Cotton M.D."/>
            <person name="Fujii C."/>
            <person name="Garland S.A."/>
            <person name="Hatch B."/>
            <person name="Horst K."/>
            <person name="Roberts K.M."/>
            <person name="Sandusky M."/>
            <person name="Weidman J.F."/>
            <person name="Smith H.O."/>
            <person name="Venter J.C."/>
        </authorList>
    </citation>
    <scope>NUCLEOTIDE SEQUENCE [LARGE SCALE GENOMIC DNA]</scope>
    <source>
        <strain>Nichols</strain>
    </source>
</reference>
<proteinExistence type="inferred from homology"/>
<gene>
    <name evidence="1" type="primary">ruvA</name>
    <name type="ordered locus">TP_0543</name>
</gene>
<organism>
    <name type="scientific">Treponema pallidum (strain Nichols)</name>
    <dbReference type="NCBI Taxonomy" id="243276"/>
    <lineage>
        <taxon>Bacteria</taxon>
        <taxon>Pseudomonadati</taxon>
        <taxon>Spirochaetota</taxon>
        <taxon>Spirochaetia</taxon>
        <taxon>Spirochaetales</taxon>
        <taxon>Treponemataceae</taxon>
        <taxon>Treponema</taxon>
    </lineage>
</organism>
<sequence length="227" mass="24399">MFESISGILTLHERERLCVEVHGIEWEIAVSAYSSAAFGEVGSHVKVFTWLYHREDALRLFGFSNVQERTLFLSLTKVEGIGPKQALKVLSSISSQALCAALDTGDLCALQRIPGIGKKTAQRMLLALKGTLALTDAASCAQSQTDDRAAHPSNLGCAPHAREIEDLVTALVQMGYDRKMAAEVIAQESAALCSVGRSLYEEEATVLKRAILALSIAHPHAVAPAAE</sequence>
<protein>
    <recommendedName>
        <fullName evidence="1">Holliday junction branch migration complex subunit RuvA</fullName>
    </recommendedName>
</protein>
<feature type="chain" id="PRO_0000094703" description="Holliday junction branch migration complex subunit RuvA">
    <location>
        <begin position="1"/>
        <end position="227"/>
    </location>
</feature>
<feature type="region of interest" description="Domain I" evidence="1">
    <location>
        <begin position="1"/>
        <end position="64"/>
    </location>
</feature>
<feature type="region of interest" description="Domain II" evidence="1">
    <location>
        <begin position="65"/>
        <end position="143"/>
    </location>
</feature>
<feature type="region of interest" description="Flexible linker" evidence="1">
    <location>
        <begin position="144"/>
        <end position="158"/>
    </location>
</feature>
<feature type="region of interest" description="Domain III" evidence="1">
    <location>
        <begin position="159"/>
        <end position="227"/>
    </location>
</feature>
<evidence type="ECO:0000255" key="1">
    <source>
        <dbReference type="HAMAP-Rule" id="MF_00031"/>
    </source>
</evidence>
<keyword id="KW-0963">Cytoplasm</keyword>
<keyword id="KW-0227">DNA damage</keyword>
<keyword id="KW-0233">DNA recombination</keyword>
<keyword id="KW-0234">DNA repair</keyword>
<keyword id="KW-0238">DNA-binding</keyword>
<keyword id="KW-1185">Reference proteome</keyword>
<name>RUVA_TREPA</name>
<comment type="function">
    <text evidence="1">The RuvA-RuvB-RuvC complex processes Holliday junction (HJ) DNA during genetic recombination and DNA repair, while the RuvA-RuvB complex plays an important role in the rescue of blocked DNA replication forks via replication fork reversal (RFR). RuvA specifically binds to HJ cruciform DNA, conferring on it an open structure. The RuvB hexamer acts as an ATP-dependent pump, pulling dsDNA into and through the RuvAB complex. HJ branch migration allows RuvC to scan DNA until it finds its consensus sequence, where it cleaves and resolves the cruciform DNA.</text>
</comment>
<comment type="subunit">
    <text evidence="1">Homotetramer. Forms an RuvA(8)-RuvB(12)-Holliday junction (HJ) complex. HJ DNA is sandwiched between 2 RuvA tetramers; dsDNA enters through RuvA and exits via RuvB. An RuvB hexamer assembles on each DNA strand where it exits the tetramer. Each RuvB hexamer is contacted by two RuvA subunits (via domain III) on 2 adjacent RuvB subunits; this complex drives branch migration. In the full resolvosome a probable DNA-RuvA(4)-RuvB(12)-RuvC(2) complex forms which resolves the HJ.</text>
</comment>
<comment type="subcellular location">
    <subcellularLocation>
        <location evidence="1">Cytoplasm</location>
    </subcellularLocation>
</comment>
<comment type="domain">
    <text evidence="1">Has three domains with a flexible linker between the domains II and III and assumes an 'L' shape. Domain III is highly mobile and contacts RuvB.</text>
</comment>
<comment type="similarity">
    <text evidence="1">Belongs to the RuvA family.</text>
</comment>